<organism>
    <name type="scientific">Shewanella sp. (strain ANA-3)</name>
    <dbReference type="NCBI Taxonomy" id="94122"/>
    <lineage>
        <taxon>Bacteria</taxon>
        <taxon>Pseudomonadati</taxon>
        <taxon>Pseudomonadota</taxon>
        <taxon>Gammaproteobacteria</taxon>
        <taxon>Alteromonadales</taxon>
        <taxon>Shewanellaceae</taxon>
        <taxon>Shewanella</taxon>
    </lineage>
</organism>
<gene>
    <name evidence="1" type="primary">rnt</name>
    <name type="ordered locus">Shewana3_2540</name>
</gene>
<dbReference type="EC" id="3.1.13.-" evidence="1"/>
<dbReference type="EMBL" id="CP000469">
    <property type="protein sequence ID" value="ABK48767.1"/>
    <property type="molecule type" value="Genomic_DNA"/>
</dbReference>
<dbReference type="RefSeq" id="WP_011717450.1">
    <property type="nucleotide sequence ID" value="NC_008577.1"/>
</dbReference>
<dbReference type="SMR" id="A0KY98"/>
<dbReference type="STRING" id="94122.Shewana3_2540"/>
<dbReference type="GeneID" id="94728485"/>
<dbReference type="KEGG" id="shn:Shewana3_2540"/>
<dbReference type="eggNOG" id="COG0847">
    <property type="taxonomic scope" value="Bacteria"/>
</dbReference>
<dbReference type="HOGENOM" id="CLU_082724_0_0_6"/>
<dbReference type="OrthoDB" id="9778264at2"/>
<dbReference type="Proteomes" id="UP000002589">
    <property type="component" value="Chromosome"/>
</dbReference>
<dbReference type="GO" id="GO:0005829">
    <property type="term" value="C:cytosol"/>
    <property type="evidence" value="ECO:0007669"/>
    <property type="project" value="TreeGrafter"/>
</dbReference>
<dbReference type="GO" id="GO:0008408">
    <property type="term" value="F:3'-5' exonuclease activity"/>
    <property type="evidence" value="ECO:0007669"/>
    <property type="project" value="TreeGrafter"/>
</dbReference>
<dbReference type="GO" id="GO:0000287">
    <property type="term" value="F:magnesium ion binding"/>
    <property type="evidence" value="ECO:0007669"/>
    <property type="project" value="UniProtKB-UniRule"/>
</dbReference>
<dbReference type="GO" id="GO:0003676">
    <property type="term" value="F:nucleic acid binding"/>
    <property type="evidence" value="ECO:0007669"/>
    <property type="project" value="InterPro"/>
</dbReference>
<dbReference type="GO" id="GO:0016896">
    <property type="term" value="F:RNA exonuclease activity, producing 5'-phosphomonoesters"/>
    <property type="evidence" value="ECO:0007669"/>
    <property type="project" value="UniProtKB-UniRule"/>
</dbReference>
<dbReference type="GO" id="GO:0045004">
    <property type="term" value="P:DNA replication proofreading"/>
    <property type="evidence" value="ECO:0007669"/>
    <property type="project" value="TreeGrafter"/>
</dbReference>
<dbReference type="GO" id="GO:0008033">
    <property type="term" value="P:tRNA processing"/>
    <property type="evidence" value="ECO:0007669"/>
    <property type="project" value="UniProtKB-KW"/>
</dbReference>
<dbReference type="CDD" id="cd06134">
    <property type="entry name" value="RNaseT"/>
    <property type="match status" value="1"/>
</dbReference>
<dbReference type="FunFam" id="3.30.420.10:FF:000009">
    <property type="entry name" value="Ribonuclease T"/>
    <property type="match status" value="1"/>
</dbReference>
<dbReference type="Gene3D" id="3.30.420.10">
    <property type="entry name" value="Ribonuclease H-like superfamily/Ribonuclease H"/>
    <property type="match status" value="1"/>
</dbReference>
<dbReference type="HAMAP" id="MF_00157">
    <property type="entry name" value="RNase_T"/>
    <property type="match status" value="1"/>
</dbReference>
<dbReference type="InterPro" id="IPR013520">
    <property type="entry name" value="Exonuclease_RNaseT/DNA_pol3"/>
</dbReference>
<dbReference type="InterPro" id="IPR005987">
    <property type="entry name" value="RNase_T"/>
</dbReference>
<dbReference type="InterPro" id="IPR012337">
    <property type="entry name" value="RNaseH-like_sf"/>
</dbReference>
<dbReference type="InterPro" id="IPR036397">
    <property type="entry name" value="RNaseH_sf"/>
</dbReference>
<dbReference type="NCBIfam" id="TIGR01298">
    <property type="entry name" value="RNaseT"/>
    <property type="match status" value="1"/>
</dbReference>
<dbReference type="PANTHER" id="PTHR30231">
    <property type="entry name" value="DNA POLYMERASE III SUBUNIT EPSILON"/>
    <property type="match status" value="1"/>
</dbReference>
<dbReference type="PANTHER" id="PTHR30231:SF2">
    <property type="entry name" value="RIBONUCLEASE T"/>
    <property type="match status" value="1"/>
</dbReference>
<dbReference type="Pfam" id="PF00929">
    <property type="entry name" value="RNase_T"/>
    <property type="match status" value="1"/>
</dbReference>
<dbReference type="SMART" id="SM00479">
    <property type="entry name" value="EXOIII"/>
    <property type="match status" value="1"/>
</dbReference>
<dbReference type="SUPFAM" id="SSF53098">
    <property type="entry name" value="Ribonuclease H-like"/>
    <property type="match status" value="1"/>
</dbReference>
<accession>A0KY98</accession>
<comment type="function">
    <text evidence="1">Trims short 3' overhangs of a variety of RNA species, leaving a one or two nucleotide 3' overhang. Responsible for the end-turnover of tRNA: specifically removes the terminal AMP residue from uncharged tRNA (tRNA-C-C-A). Also appears to be involved in tRNA biosynthesis.</text>
</comment>
<comment type="cofactor">
    <cofactor evidence="1">
        <name>Mg(2+)</name>
        <dbReference type="ChEBI" id="CHEBI:18420"/>
    </cofactor>
    <text evidence="1">Binds two Mg(2+) per subunit. The active form of the enzyme binds two Mg(2+) ions in its active site. The first Mg(2+) forms only one salt bridge with the protein.</text>
</comment>
<comment type="subunit">
    <text evidence="1">Homodimer.</text>
</comment>
<comment type="similarity">
    <text evidence="1">Belongs to the RNase T family.</text>
</comment>
<protein>
    <recommendedName>
        <fullName evidence="1">Ribonuclease T</fullName>
        <ecNumber evidence="1">3.1.13.-</ecNumber>
    </recommendedName>
    <alternativeName>
        <fullName evidence="1">Exoribonuclease T</fullName>
        <shortName evidence="1">RNase T</shortName>
    </alternativeName>
</protein>
<feature type="chain" id="PRO_1000011417" description="Ribonuclease T">
    <location>
        <begin position="1"/>
        <end position="222"/>
    </location>
</feature>
<feature type="domain" description="Exonuclease" evidence="1">
    <location>
        <begin position="20"/>
        <end position="194"/>
    </location>
</feature>
<feature type="active site" description="Proton donor/acceptor" evidence="1">
    <location>
        <position position="181"/>
    </location>
</feature>
<feature type="binding site" evidence="1">
    <location>
        <position position="23"/>
    </location>
    <ligand>
        <name>Mg(2+)</name>
        <dbReference type="ChEBI" id="CHEBI:18420"/>
        <label>1</label>
        <note>catalytic</note>
    </ligand>
</feature>
<feature type="binding site" evidence="1">
    <location>
        <position position="23"/>
    </location>
    <ligand>
        <name>Mg(2+)</name>
        <dbReference type="ChEBI" id="CHEBI:18420"/>
        <label>2</label>
        <note>catalytic</note>
    </ligand>
</feature>
<feature type="binding site" evidence="1">
    <location>
        <position position="25"/>
    </location>
    <ligand>
        <name>Mg(2+)</name>
        <dbReference type="ChEBI" id="CHEBI:18420"/>
        <label>2</label>
        <note>catalytic</note>
    </ligand>
</feature>
<feature type="binding site" evidence="1">
    <location>
        <position position="181"/>
    </location>
    <ligand>
        <name>Mg(2+)</name>
        <dbReference type="ChEBI" id="CHEBI:18420"/>
        <label>2</label>
        <note>catalytic</note>
    </ligand>
</feature>
<feature type="binding site" evidence="1">
    <location>
        <position position="186"/>
    </location>
    <ligand>
        <name>Mg(2+)</name>
        <dbReference type="ChEBI" id="CHEBI:18420"/>
        <label>2</label>
        <note>catalytic</note>
    </ligand>
</feature>
<feature type="site" description="Important for substrate binding and specificity" evidence="1">
    <location>
        <position position="29"/>
    </location>
</feature>
<feature type="site" description="Important for substrate binding and specificity" evidence="1">
    <location>
        <position position="77"/>
    </location>
</feature>
<feature type="site" description="Important for substrate binding and specificity" evidence="1">
    <location>
        <position position="124"/>
    </location>
</feature>
<feature type="site" description="Important for substrate binding and specificity" evidence="1">
    <location>
        <position position="146"/>
    </location>
</feature>
<evidence type="ECO:0000255" key="1">
    <source>
        <dbReference type="HAMAP-Rule" id="MF_00157"/>
    </source>
</evidence>
<name>RNT_SHESA</name>
<proteinExistence type="inferred from homology"/>
<keyword id="KW-0269">Exonuclease</keyword>
<keyword id="KW-0378">Hydrolase</keyword>
<keyword id="KW-0460">Magnesium</keyword>
<keyword id="KW-0479">Metal-binding</keyword>
<keyword id="KW-0540">Nuclease</keyword>
<keyword id="KW-0819">tRNA processing</keyword>
<reference key="1">
    <citation type="submission" date="2006-09" db="EMBL/GenBank/DDBJ databases">
        <title>Complete sequence of chromosome 1 of Shewanella sp. ANA-3.</title>
        <authorList>
            <person name="Copeland A."/>
            <person name="Lucas S."/>
            <person name="Lapidus A."/>
            <person name="Barry K."/>
            <person name="Detter J.C."/>
            <person name="Glavina del Rio T."/>
            <person name="Hammon N."/>
            <person name="Israni S."/>
            <person name="Dalin E."/>
            <person name="Tice H."/>
            <person name="Pitluck S."/>
            <person name="Chertkov O."/>
            <person name="Brettin T."/>
            <person name="Bruce D."/>
            <person name="Han C."/>
            <person name="Tapia R."/>
            <person name="Gilna P."/>
            <person name="Schmutz J."/>
            <person name="Larimer F."/>
            <person name="Land M."/>
            <person name="Hauser L."/>
            <person name="Kyrpides N."/>
            <person name="Kim E."/>
            <person name="Newman D."/>
            <person name="Salticov C."/>
            <person name="Konstantinidis K."/>
            <person name="Klappenback J."/>
            <person name="Tiedje J."/>
            <person name="Richardson P."/>
        </authorList>
    </citation>
    <scope>NUCLEOTIDE SEQUENCE [LARGE SCALE GENOMIC DNA]</scope>
    <source>
        <strain>ANA-3</strain>
    </source>
</reference>
<sequence length="222" mass="24312">MSDISDANKLKHRFRGYFPVVIDVETAGFNSQTDALLEIAVTLLKMDDEGLLGIDKTLHFNIEPFEGANLEPEALAFNGIDPTNPLRGAVSEKEAFLEIFKAVKKAQKASDCHRSIIVAHNAAFDHGFVSKAIERCDLKRSPFHPFATFDTATLAGLAIGHTVLAKACIMAGIPFDNKEAHSALYDTERTAELFCHIVNRWKQLGGWPLLAAGESEDADGEE</sequence>